<comment type="function">
    <text evidence="1">With S4 and S5 plays an important role in translational accuracy. Located at the interface of the 30S and 50S subunits (By similarity).</text>
</comment>
<comment type="subunit">
    <text evidence="1">Part of the 30S ribosomal subunit.</text>
</comment>
<comment type="subcellular location">
    <subcellularLocation>
        <location>Plastid</location>
        <location>Chloroplast</location>
    </subcellularLocation>
</comment>
<comment type="similarity">
    <text evidence="2">Belongs to the universal ribosomal protein uS12 family.</text>
</comment>
<keyword id="KW-0150">Chloroplast</keyword>
<keyword id="KW-0934">Plastid</keyword>
<keyword id="KW-0687">Ribonucleoprotein</keyword>
<keyword id="KW-0689">Ribosomal protein</keyword>
<keyword id="KW-0694">RNA-binding</keyword>
<keyword id="KW-0699">rRNA-binding</keyword>
<evidence type="ECO:0000250" key="1"/>
<evidence type="ECO:0000305" key="2"/>
<sequence length="126" mass="14122">MPTIQQLVRSRRIQIKKKTKSPALVNCPQRRGVCTRVYTTTPKKPNSAIRKVARVRLTSDLKVTAYIPGIGHNLQEHSVVLIRGGRVKDLPGVRYHIIRGALDSVGVKDRTQGRSKYGVKKPKSDK</sequence>
<feature type="chain" id="PRO_0000146412" description="Small ribosomal subunit protein uS12c">
    <location>
        <begin position="1"/>
        <end position="126"/>
    </location>
</feature>
<organism>
    <name type="scientific">Trieres chinensis</name>
    <name type="common">Marine centric diatom</name>
    <name type="synonym">Odontella sinensis</name>
    <dbReference type="NCBI Taxonomy" id="1514140"/>
    <lineage>
        <taxon>Eukaryota</taxon>
        <taxon>Sar</taxon>
        <taxon>Stramenopiles</taxon>
        <taxon>Ochrophyta</taxon>
        <taxon>Bacillariophyta</taxon>
        <taxon>Mediophyceae</taxon>
        <taxon>Biddulphiophycidae</taxon>
        <taxon>Eupodiscales</taxon>
        <taxon>Parodontellaceae</taxon>
        <taxon>Trieres</taxon>
    </lineage>
</organism>
<dbReference type="EMBL" id="Z67753">
    <property type="protein sequence ID" value="CAA91623.1"/>
    <property type="molecule type" value="Genomic_DNA"/>
</dbReference>
<dbReference type="PIR" id="S78250">
    <property type="entry name" value="S78250"/>
</dbReference>
<dbReference type="RefSeq" id="NP_043591.1">
    <property type="nucleotide sequence ID" value="NC_001713.1"/>
</dbReference>
<dbReference type="SMR" id="P49500"/>
<dbReference type="GeneID" id="801782"/>
<dbReference type="GO" id="GO:0009507">
    <property type="term" value="C:chloroplast"/>
    <property type="evidence" value="ECO:0007669"/>
    <property type="project" value="UniProtKB-SubCell"/>
</dbReference>
<dbReference type="GO" id="GO:0015935">
    <property type="term" value="C:small ribosomal subunit"/>
    <property type="evidence" value="ECO:0007669"/>
    <property type="project" value="InterPro"/>
</dbReference>
<dbReference type="GO" id="GO:0019843">
    <property type="term" value="F:rRNA binding"/>
    <property type="evidence" value="ECO:0007669"/>
    <property type="project" value="UniProtKB-UniRule"/>
</dbReference>
<dbReference type="GO" id="GO:0003735">
    <property type="term" value="F:structural constituent of ribosome"/>
    <property type="evidence" value="ECO:0007669"/>
    <property type="project" value="InterPro"/>
</dbReference>
<dbReference type="GO" id="GO:0006412">
    <property type="term" value="P:translation"/>
    <property type="evidence" value="ECO:0007669"/>
    <property type="project" value="UniProtKB-UniRule"/>
</dbReference>
<dbReference type="CDD" id="cd03368">
    <property type="entry name" value="Ribosomal_S12"/>
    <property type="match status" value="1"/>
</dbReference>
<dbReference type="FunFam" id="2.40.50.140:FF:000001">
    <property type="entry name" value="30S ribosomal protein S12"/>
    <property type="match status" value="1"/>
</dbReference>
<dbReference type="Gene3D" id="2.40.50.140">
    <property type="entry name" value="Nucleic acid-binding proteins"/>
    <property type="match status" value="1"/>
</dbReference>
<dbReference type="HAMAP" id="MF_00403_B">
    <property type="entry name" value="Ribosomal_uS12_B"/>
    <property type="match status" value="1"/>
</dbReference>
<dbReference type="InterPro" id="IPR012340">
    <property type="entry name" value="NA-bd_OB-fold"/>
</dbReference>
<dbReference type="InterPro" id="IPR006032">
    <property type="entry name" value="Ribosomal_uS12"/>
</dbReference>
<dbReference type="InterPro" id="IPR005679">
    <property type="entry name" value="Ribosomal_uS12_bac"/>
</dbReference>
<dbReference type="NCBIfam" id="TIGR00981">
    <property type="entry name" value="rpsL_bact"/>
    <property type="match status" value="1"/>
</dbReference>
<dbReference type="PANTHER" id="PTHR11652">
    <property type="entry name" value="30S RIBOSOMAL PROTEIN S12 FAMILY MEMBER"/>
    <property type="match status" value="1"/>
</dbReference>
<dbReference type="Pfam" id="PF00164">
    <property type="entry name" value="Ribosom_S12_S23"/>
    <property type="match status" value="1"/>
</dbReference>
<dbReference type="PIRSF" id="PIRSF002133">
    <property type="entry name" value="Ribosomal_S12/S23"/>
    <property type="match status" value="1"/>
</dbReference>
<dbReference type="PRINTS" id="PR01034">
    <property type="entry name" value="RIBOSOMALS12"/>
</dbReference>
<dbReference type="SUPFAM" id="SSF50249">
    <property type="entry name" value="Nucleic acid-binding proteins"/>
    <property type="match status" value="1"/>
</dbReference>
<dbReference type="PROSITE" id="PS00055">
    <property type="entry name" value="RIBOSOMAL_S12"/>
    <property type="match status" value="1"/>
</dbReference>
<protein>
    <recommendedName>
        <fullName evidence="2">Small ribosomal subunit protein uS12c</fullName>
    </recommendedName>
    <alternativeName>
        <fullName>30S ribosomal protein S12, chloroplastic</fullName>
    </alternativeName>
</protein>
<accession>P49500</accession>
<gene>
    <name type="primary">rps12</name>
</gene>
<name>RR12_TRICV</name>
<reference key="1">
    <citation type="journal article" date="1995" name="Plant Mol. Biol. Rep.">
        <title>The chloroplast genome of a chlorophyll a+c-containing alga, Odontella sinensis.</title>
        <authorList>
            <person name="Kowallik K.V."/>
            <person name="Stoebe B."/>
            <person name="Schaffran I."/>
            <person name="Kroth-Pancic P."/>
            <person name="Freier U."/>
        </authorList>
    </citation>
    <scope>NUCLEOTIDE SEQUENCE [LARGE SCALE GENOMIC DNA]</scope>
</reference>
<proteinExistence type="inferred from homology"/>
<geneLocation type="chloroplast"/>